<protein>
    <recommendedName>
        <fullName evidence="1">UPF0297 protein BCE_4470</fullName>
    </recommendedName>
</protein>
<dbReference type="EMBL" id="AE017194">
    <property type="protein sequence ID" value="AAS43371.1"/>
    <property type="status" value="ALT_INIT"/>
    <property type="molecule type" value="Genomic_DNA"/>
</dbReference>
<dbReference type="SMR" id="Q730E6"/>
<dbReference type="KEGG" id="bca:BCE_4470"/>
<dbReference type="HOGENOM" id="CLU_162466_0_0_9"/>
<dbReference type="Proteomes" id="UP000002527">
    <property type="component" value="Chromosome"/>
</dbReference>
<dbReference type="HAMAP" id="MF_01507">
    <property type="entry name" value="UPF0297"/>
    <property type="match status" value="1"/>
</dbReference>
<dbReference type="InterPro" id="IPR009309">
    <property type="entry name" value="IreB"/>
</dbReference>
<dbReference type="NCBIfam" id="NF003997">
    <property type="entry name" value="PRK05473.1"/>
    <property type="match status" value="1"/>
</dbReference>
<dbReference type="PANTHER" id="PTHR40067">
    <property type="entry name" value="UPF0297 PROTEIN YRZL"/>
    <property type="match status" value="1"/>
</dbReference>
<dbReference type="PANTHER" id="PTHR40067:SF1">
    <property type="entry name" value="UPF0297 PROTEIN YRZL"/>
    <property type="match status" value="1"/>
</dbReference>
<dbReference type="Pfam" id="PF06135">
    <property type="entry name" value="IreB"/>
    <property type="match status" value="1"/>
</dbReference>
<dbReference type="PIRSF" id="PIRSF037258">
    <property type="entry name" value="DUF965_bac"/>
    <property type="match status" value="1"/>
</dbReference>
<reference key="1">
    <citation type="journal article" date="2004" name="Nucleic Acids Res.">
        <title>The genome sequence of Bacillus cereus ATCC 10987 reveals metabolic adaptations and a large plasmid related to Bacillus anthracis pXO1.</title>
        <authorList>
            <person name="Rasko D.A."/>
            <person name="Ravel J."/>
            <person name="Oekstad O.A."/>
            <person name="Helgason E."/>
            <person name="Cer R.Z."/>
            <person name="Jiang L."/>
            <person name="Shores K.A."/>
            <person name="Fouts D.E."/>
            <person name="Tourasse N.J."/>
            <person name="Angiuoli S.V."/>
            <person name="Kolonay J.F."/>
            <person name="Nelson W.C."/>
            <person name="Kolstoe A.-B."/>
            <person name="Fraser C.M."/>
            <person name="Read T.D."/>
        </authorList>
    </citation>
    <scope>NUCLEOTIDE SEQUENCE [LARGE SCALE GENOMIC DNA]</scope>
    <source>
        <strain>ATCC 10987 / NRS 248</strain>
    </source>
</reference>
<comment type="similarity">
    <text evidence="1">Belongs to the UPF0297 family.</text>
</comment>
<comment type="sequence caution" evidence="2">
    <conflict type="erroneous initiation">
        <sequence resource="EMBL-CDS" id="AAS43371"/>
    </conflict>
</comment>
<accession>Q730E6</accession>
<proteinExistence type="inferred from homology"/>
<organism>
    <name type="scientific">Bacillus cereus (strain ATCC 10987 / NRS 248)</name>
    <dbReference type="NCBI Taxonomy" id="222523"/>
    <lineage>
        <taxon>Bacteria</taxon>
        <taxon>Bacillati</taxon>
        <taxon>Bacillota</taxon>
        <taxon>Bacilli</taxon>
        <taxon>Bacillales</taxon>
        <taxon>Bacillaceae</taxon>
        <taxon>Bacillus</taxon>
        <taxon>Bacillus cereus group</taxon>
    </lineage>
</organism>
<gene>
    <name type="ordered locus">BCE_4470</name>
</gene>
<name>Y4470_BACC1</name>
<sequence>MDGFDKTMKFSIQDEKQSVHVNDVLLTVYDALQEKGYNPINQIVGYLLSGDPAYIPRHKDARSIIRKLERDELIEELVKSYLKHHREE</sequence>
<feature type="chain" id="PRO_0000216957" description="UPF0297 protein BCE_4470">
    <location>
        <begin position="1"/>
        <end position="88"/>
    </location>
</feature>
<evidence type="ECO:0000255" key="1">
    <source>
        <dbReference type="HAMAP-Rule" id="MF_01507"/>
    </source>
</evidence>
<evidence type="ECO:0000305" key="2"/>